<dbReference type="EC" id="2.1.1.228" evidence="1"/>
<dbReference type="EMBL" id="CP000647">
    <property type="protein sequence ID" value="ABR78336.1"/>
    <property type="molecule type" value="Genomic_DNA"/>
</dbReference>
<dbReference type="RefSeq" id="WP_015958818.1">
    <property type="nucleotide sequence ID" value="NC_009648.1"/>
</dbReference>
<dbReference type="SMR" id="A6TCL5"/>
<dbReference type="STRING" id="272620.KPN_02930"/>
<dbReference type="PaxDb" id="272620-KPN_02930"/>
<dbReference type="EnsemblBacteria" id="ABR78336">
    <property type="protein sequence ID" value="ABR78336"/>
    <property type="gene ID" value="KPN_02930"/>
</dbReference>
<dbReference type="KEGG" id="kpn:KPN_02930"/>
<dbReference type="HOGENOM" id="CLU_047363_0_1_6"/>
<dbReference type="Proteomes" id="UP000000265">
    <property type="component" value="Chromosome"/>
</dbReference>
<dbReference type="GO" id="GO:0005829">
    <property type="term" value="C:cytosol"/>
    <property type="evidence" value="ECO:0007669"/>
    <property type="project" value="TreeGrafter"/>
</dbReference>
<dbReference type="GO" id="GO:0052906">
    <property type="term" value="F:tRNA (guanine(37)-N1)-methyltransferase activity"/>
    <property type="evidence" value="ECO:0007669"/>
    <property type="project" value="UniProtKB-UniRule"/>
</dbReference>
<dbReference type="GO" id="GO:0002939">
    <property type="term" value="P:tRNA N1-guanine methylation"/>
    <property type="evidence" value="ECO:0007669"/>
    <property type="project" value="TreeGrafter"/>
</dbReference>
<dbReference type="CDD" id="cd18080">
    <property type="entry name" value="TrmD-like"/>
    <property type="match status" value="1"/>
</dbReference>
<dbReference type="FunFam" id="1.10.1270.20:FF:000001">
    <property type="entry name" value="tRNA (guanine-N(1)-)-methyltransferase"/>
    <property type="match status" value="1"/>
</dbReference>
<dbReference type="FunFam" id="3.40.1280.10:FF:000001">
    <property type="entry name" value="tRNA (guanine-N(1)-)-methyltransferase"/>
    <property type="match status" value="1"/>
</dbReference>
<dbReference type="Gene3D" id="3.40.1280.10">
    <property type="match status" value="1"/>
</dbReference>
<dbReference type="Gene3D" id="1.10.1270.20">
    <property type="entry name" value="tRNA(m1g37)methyltransferase, domain 2"/>
    <property type="match status" value="1"/>
</dbReference>
<dbReference type="HAMAP" id="MF_00605">
    <property type="entry name" value="TrmD"/>
    <property type="match status" value="1"/>
</dbReference>
<dbReference type="InterPro" id="IPR029028">
    <property type="entry name" value="Alpha/beta_knot_MTases"/>
</dbReference>
<dbReference type="InterPro" id="IPR023148">
    <property type="entry name" value="tRNA_m1G_MeTrfase_C_sf"/>
</dbReference>
<dbReference type="InterPro" id="IPR002649">
    <property type="entry name" value="tRNA_m1G_MeTrfase_TrmD"/>
</dbReference>
<dbReference type="InterPro" id="IPR029026">
    <property type="entry name" value="tRNA_m1G_MTases_N"/>
</dbReference>
<dbReference type="InterPro" id="IPR016009">
    <property type="entry name" value="tRNA_MeTrfase_TRMD/TRM10"/>
</dbReference>
<dbReference type="NCBIfam" id="NF000648">
    <property type="entry name" value="PRK00026.1"/>
    <property type="match status" value="1"/>
</dbReference>
<dbReference type="NCBIfam" id="TIGR00088">
    <property type="entry name" value="trmD"/>
    <property type="match status" value="1"/>
</dbReference>
<dbReference type="PANTHER" id="PTHR46417">
    <property type="entry name" value="TRNA (GUANINE-N(1)-)-METHYLTRANSFERASE"/>
    <property type="match status" value="1"/>
</dbReference>
<dbReference type="PANTHER" id="PTHR46417:SF1">
    <property type="entry name" value="TRNA (GUANINE-N(1)-)-METHYLTRANSFERASE"/>
    <property type="match status" value="1"/>
</dbReference>
<dbReference type="Pfam" id="PF01746">
    <property type="entry name" value="tRNA_m1G_MT"/>
    <property type="match status" value="1"/>
</dbReference>
<dbReference type="PIRSF" id="PIRSF000386">
    <property type="entry name" value="tRNA_mtase"/>
    <property type="match status" value="1"/>
</dbReference>
<dbReference type="SUPFAM" id="SSF75217">
    <property type="entry name" value="alpha/beta knot"/>
    <property type="match status" value="1"/>
</dbReference>
<gene>
    <name evidence="1" type="primary">trmD</name>
    <name type="ordered locus">KPN78578_28750</name>
    <name type="ORF">KPN_02930</name>
</gene>
<reference key="1">
    <citation type="submission" date="2006-09" db="EMBL/GenBank/DDBJ databases">
        <authorList>
            <consortium name="The Klebsiella pneumonia Genome Sequencing Project"/>
            <person name="McClelland M."/>
            <person name="Sanderson E.K."/>
            <person name="Spieth J."/>
            <person name="Clifton W.S."/>
            <person name="Latreille P."/>
            <person name="Sabo A."/>
            <person name="Pepin K."/>
            <person name="Bhonagiri V."/>
            <person name="Porwollik S."/>
            <person name="Ali J."/>
            <person name="Wilson R.K."/>
        </authorList>
    </citation>
    <scope>NUCLEOTIDE SEQUENCE [LARGE SCALE GENOMIC DNA]</scope>
    <source>
        <strain>ATCC 700721 / MGH 78578</strain>
    </source>
</reference>
<accession>A6TCL5</accession>
<feature type="chain" id="PRO_1000006487" description="tRNA (guanine-N(1)-)-methyltransferase">
    <location>
        <begin position="1"/>
        <end position="255"/>
    </location>
</feature>
<feature type="binding site" evidence="1">
    <location>
        <position position="113"/>
    </location>
    <ligand>
        <name>S-adenosyl-L-methionine</name>
        <dbReference type="ChEBI" id="CHEBI:59789"/>
    </ligand>
</feature>
<feature type="binding site" evidence="1">
    <location>
        <begin position="133"/>
        <end position="138"/>
    </location>
    <ligand>
        <name>S-adenosyl-L-methionine</name>
        <dbReference type="ChEBI" id="CHEBI:59789"/>
    </ligand>
</feature>
<comment type="function">
    <text evidence="1">Specifically methylates guanosine-37 in various tRNAs.</text>
</comment>
<comment type="catalytic activity">
    <reaction evidence="1">
        <text>guanosine(37) in tRNA + S-adenosyl-L-methionine = N(1)-methylguanosine(37) in tRNA + S-adenosyl-L-homocysteine + H(+)</text>
        <dbReference type="Rhea" id="RHEA:36899"/>
        <dbReference type="Rhea" id="RHEA-COMP:10145"/>
        <dbReference type="Rhea" id="RHEA-COMP:10147"/>
        <dbReference type="ChEBI" id="CHEBI:15378"/>
        <dbReference type="ChEBI" id="CHEBI:57856"/>
        <dbReference type="ChEBI" id="CHEBI:59789"/>
        <dbReference type="ChEBI" id="CHEBI:73542"/>
        <dbReference type="ChEBI" id="CHEBI:74269"/>
        <dbReference type="EC" id="2.1.1.228"/>
    </reaction>
</comment>
<comment type="subunit">
    <text evidence="1">Homodimer.</text>
</comment>
<comment type="subcellular location">
    <subcellularLocation>
        <location evidence="1">Cytoplasm</location>
    </subcellularLocation>
</comment>
<comment type="similarity">
    <text evidence="1">Belongs to the RNA methyltransferase TrmD family.</text>
</comment>
<name>TRMD_KLEP7</name>
<keyword id="KW-0963">Cytoplasm</keyword>
<keyword id="KW-0489">Methyltransferase</keyword>
<keyword id="KW-0949">S-adenosyl-L-methionine</keyword>
<keyword id="KW-0808">Transferase</keyword>
<keyword id="KW-0819">tRNA processing</keyword>
<sequence length="255" mass="28466">MWIGIISLFPEMFRAITDYGVTGRAVKNGLLSIESWSPRDFTHDRHRTVDDRPYGGGPGMLMMVQPLRDAIHAAKAAAGEGAKVIYLSPQGRKLDQAGVSELATNQKLILVCGRYEGIDERVIQTEIDEEWSIGDYVLSGGELPAMTLIDSVSRFIPGVLGHEASATEDSFADGLLDCPHYTRPEVLEEMEVPPVLLSGNHAEIRRWRLKQSLGRTWLRRPELLENLALTEEQAKLLSEFKTEHAQQQHKHDGQA</sequence>
<proteinExistence type="inferred from homology"/>
<organism>
    <name type="scientific">Klebsiella pneumoniae subsp. pneumoniae (strain ATCC 700721 / MGH 78578)</name>
    <dbReference type="NCBI Taxonomy" id="272620"/>
    <lineage>
        <taxon>Bacteria</taxon>
        <taxon>Pseudomonadati</taxon>
        <taxon>Pseudomonadota</taxon>
        <taxon>Gammaproteobacteria</taxon>
        <taxon>Enterobacterales</taxon>
        <taxon>Enterobacteriaceae</taxon>
        <taxon>Klebsiella/Raoultella group</taxon>
        <taxon>Klebsiella</taxon>
        <taxon>Klebsiella pneumoniae complex</taxon>
    </lineage>
</organism>
<protein>
    <recommendedName>
        <fullName evidence="1">tRNA (guanine-N(1)-)-methyltransferase</fullName>
        <ecNumber evidence="1">2.1.1.228</ecNumber>
    </recommendedName>
    <alternativeName>
        <fullName evidence="1">M1G-methyltransferase</fullName>
    </alternativeName>
    <alternativeName>
        <fullName evidence="1">tRNA [GM37] methyltransferase</fullName>
    </alternativeName>
</protein>
<evidence type="ECO:0000255" key="1">
    <source>
        <dbReference type="HAMAP-Rule" id="MF_00605"/>
    </source>
</evidence>